<reference key="1">
    <citation type="journal article" date="2010" name="PLoS ONE">
        <title>Genome sequence of Cronobacter sakazakii BAA-894 and comparative genomic hybridization analysis with other Cronobacter species.</title>
        <authorList>
            <person name="Kucerova E."/>
            <person name="Clifton S.W."/>
            <person name="Xia X.Q."/>
            <person name="Long F."/>
            <person name="Porwollik S."/>
            <person name="Fulton L."/>
            <person name="Fronick C."/>
            <person name="Minx P."/>
            <person name="Kyung K."/>
            <person name="Warren W."/>
            <person name="Fulton R."/>
            <person name="Feng D."/>
            <person name="Wollam A."/>
            <person name="Shah N."/>
            <person name="Bhonagiri V."/>
            <person name="Nash W.E."/>
            <person name="Hallsworth-Pepin K."/>
            <person name="Wilson R.K."/>
            <person name="McClelland M."/>
            <person name="Forsythe S.J."/>
        </authorList>
    </citation>
    <scope>NUCLEOTIDE SEQUENCE [LARGE SCALE GENOMIC DNA]</scope>
    <source>
        <strain>ATCC BAA-894</strain>
    </source>
</reference>
<comment type="function">
    <text evidence="1">The RuvA-RuvB-RuvC complex processes Holliday junction (HJ) DNA during genetic recombination and DNA repair, while the RuvA-RuvB complex plays an important role in the rescue of blocked DNA replication forks via replication fork reversal (RFR). RuvA specifically binds to HJ cruciform DNA, conferring on it an open structure. The RuvB hexamer acts as an ATP-dependent pump, pulling dsDNA into and through the RuvAB complex. RuvB forms 2 homohexamers on either side of HJ DNA bound by 1 or 2 RuvA tetramers; 4 subunits per hexamer contact DNA at a time. Coordinated motions by a converter formed by DNA-disengaged RuvB subunits stimulates ATP hydrolysis and nucleotide exchange. Immobilization of the converter enables RuvB to convert the ATP-contained energy into a lever motion, pulling 2 nucleotides of DNA out of the RuvA tetramer per ATP hydrolyzed, thus driving DNA branch migration. The RuvB motors rotate together with the DNA substrate, which together with the progressing nucleotide cycle form the mechanistic basis for DNA recombination by continuous HJ branch migration. Branch migration allows RuvC to scan DNA until it finds its consensus sequence, where it cleaves and resolves cruciform DNA.</text>
</comment>
<comment type="catalytic activity">
    <reaction evidence="1">
        <text>ATP + H2O = ADP + phosphate + H(+)</text>
        <dbReference type="Rhea" id="RHEA:13065"/>
        <dbReference type="ChEBI" id="CHEBI:15377"/>
        <dbReference type="ChEBI" id="CHEBI:15378"/>
        <dbReference type="ChEBI" id="CHEBI:30616"/>
        <dbReference type="ChEBI" id="CHEBI:43474"/>
        <dbReference type="ChEBI" id="CHEBI:456216"/>
    </reaction>
</comment>
<comment type="subunit">
    <text evidence="1">Homohexamer. Forms an RuvA(8)-RuvB(12)-Holliday junction (HJ) complex. HJ DNA is sandwiched between 2 RuvA tetramers; dsDNA enters through RuvA and exits via RuvB. An RuvB hexamer assembles on each DNA strand where it exits the tetramer. Each RuvB hexamer is contacted by two RuvA subunits (via domain III) on 2 adjacent RuvB subunits; this complex drives branch migration. In the full resolvosome a probable DNA-RuvA(4)-RuvB(12)-RuvC(2) complex forms which resolves the HJ.</text>
</comment>
<comment type="subcellular location">
    <subcellularLocation>
        <location evidence="1">Cytoplasm</location>
    </subcellularLocation>
</comment>
<comment type="domain">
    <text evidence="1">Has 3 domains, the large (RuvB-L) and small ATPase (RuvB-S) domains and the C-terminal head (RuvB-H) domain. The head domain binds DNA, while the ATPase domains jointly bind ATP, ADP or are empty depending on the state of the subunit in the translocation cycle. During a single DNA translocation step the structure of each domain remains the same, but their relative positions change.</text>
</comment>
<comment type="similarity">
    <text evidence="1">Belongs to the RuvB family.</text>
</comment>
<feature type="chain" id="PRO_1000001403" description="Holliday junction branch migration complex subunit RuvB">
    <location>
        <begin position="1"/>
        <end position="336"/>
    </location>
</feature>
<feature type="region of interest" description="Large ATPase domain (RuvB-L)" evidence="1">
    <location>
        <begin position="4"/>
        <end position="184"/>
    </location>
</feature>
<feature type="region of interest" description="Small ATPAse domain (RuvB-S)" evidence="1">
    <location>
        <begin position="185"/>
        <end position="255"/>
    </location>
</feature>
<feature type="region of interest" description="Head domain (RuvB-H)" evidence="1">
    <location>
        <begin position="258"/>
        <end position="336"/>
    </location>
</feature>
<feature type="binding site" evidence="1">
    <location>
        <position position="23"/>
    </location>
    <ligand>
        <name>ATP</name>
        <dbReference type="ChEBI" id="CHEBI:30616"/>
    </ligand>
</feature>
<feature type="binding site" evidence="1">
    <location>
        <position position="24"/>
    </location>
    <ligand>
        <name>ATP</name>
        <dbReference type="ChEBI" id="CHEBI:30616"/>
    </ligand>
</feature>
<feature type="binding site" evidence="1">
    <location>
        <position position="65"/>
    </location>
    <ligand>
        <name>ATP</name>
        <dbReference type="ChEBI" id="CHEBI:30616"/>
    </ligand>
</feature>
<feature type="binding site" evidence="1">
    <location>
        <position position="68"/>
    </location>
    <ligand>
        <name>ATP</name>
        <dbReference type="ChEBI" id="CHEBI:30616"/>
    </ligand>
</feature>
<feature type="binding site" evidence="1">
    <location>
        <position position="69"/>
    </location>
    <ligand>
        <name>ATP</name>
        <dbReference type="ChEBI" id="CHEBI:30616"/>
    </ligand>
</feature>
<feature type="binding site" evidence="1">
    <location>
        <position position="69"/>
    </location>
    <ligand>
        <name>Mg(2+)</name>
        <dbReference type="ChEBI" id="CHEBI:18420"/>
    </ligand>
</feature>
<feature type="binding site" evidence="1">
    <location>
        <position position="70"/>
    </location>
    <ligand>
        <name>ATP</name>
        <dbReference type="ChEBI" id="CHEBI:30616"/>
    </ligand>
</feature>
<feature type="binding site" evidence="1">
    <location>
        <begin position="131"/>
        <end position="133"/>
    </location>
    <ligand>
        <name>ATP</name>
        <dbReference type="ChEBI" id="CHEBI:30616"/>
    </ligand>
</feature>
<feature type="binding site" evidence="1">
    <location>
        <position position="174"/>
    </location>
    <ligand>
        <name>ATP</name>
        <dbReference type="ChEBI" id="CHEBI:30616"/>
    </ligand>
</feature>
<feature type="binding site" evidence="1">
    <location>
        <position position="184"/>
    </location>
    <ligand>
        <name>ATP</name>
        <dbReference type="ChEBI" id="CHEBI:30616"/>
    </ligand>
</feature>
<feature type="binding site" evidence="1">
    <location>
        <position position="221"/>
    </location>
    <ligand>
        <name>ATP</name>
        <dbReference type="ChEBI" id="CHEBI:30616"/>
    </ligand>
</feature>
<feature type="binding site" evidence="1">
    <location>
        <position position="294"/>
    </location>
    <ligand>
        <name>DNA</name>
        <dbReference type="ChEBI" id="CHEBI:16991"/>
    </ligand>
</feature>
<feature type="binding site" evidence="1">
    <location>
        <position position="313"/>
    </location>
    <ligand>
        <name>DNA</name>
        <dbReference type="ChEBI" id="CHEBI:16991"/>
    </ligand>
</feature>
<feature type="binding site" evidence="1">
    <location>
        <position position="318"/>
    </location>
    <ligand>
        <name>DNA</name>
        <dbReference type="ChEBI" id="CHEBI:16991"/>
    </ligand>
</feature>
<proteinExistence type="inferred from homology"/>
<evidence type="ECO:0000255" key="1">
    <source>
        <dbReference type="HAMAP-Rule" id="MF_00016"/>
    </source>
</evidence>
<protein>
    <recommendedName>
        <fullName evidence="1">Holliday junction branch migration complex subunit RuvB</fullName>
        <ecNumber evidence="1">3.6.4.-</ecNumber>
    </recommendedName>
</protein>
<gene>
    <name evidence="1" type="primary">ruvB</name>
    <name type="ordered locus">ESA_01381</name>
</gene>
<dbReference type="EC" id="3.6.4.-" evidence="1"/>
<dbReference type="EMBL" id="CP000783">
    <property type="protein sequence ID" value="ABU76641.1"/>
    <property type="molecule type" value="Genomic_DNA"/>
</dbReference>
<dbReference type="RefSeq" id="WP_007794420.1">
    <property type="nucleotide sequence ID" value="NC_009778.1"/>
</dbReference>
<dbReference type="SMR" id="A7MEA3"/>
<dbReference type="KEGG" id="esa:ESA_01381"/>
<dbReference type="HOGENOM" id="CLU_055599_1_0_6"/>
<dbReference type="Proteomes" id="UP000000260">
    <property type="component" value="Chromosome"/>
</dbReference>
<dbReference type="GO" id="GO:0005737">
    <property type="term" value="C:cytoplasm"/>
    <property type="evidence" value="ECO:0007669"/>
    <property type="project" value="UniProtKB-SubCell"/>
</dbReference>
<dbReference type="GO" id="GO:0048476">
    <property type="term" value="C:Holliday junction resolvase complex"/>
    <property type="evidence" value="ECO:0007669"/>
    <property type="project" value="UniProtKB-UniRule"/>
</dbReference>
<dbReference type="GO" id="GO:0005524">
    <property type="term" value="F:ATP binding"/>
    <property type="evidence" value="ECO:0007669"/>
    <property type="project" value="UniProtKB-UniRule"/>
</dbReference>
<dbReference type="GO" id="GO:0016887">
    <property type="term" value="F:ATP hydrolysis activity"/>
    <property type="evidence" value="ECO:0007669"/>
    <property type="project" value="InterPro"/>
</dbReference>
<dbReference type="GO" id="GO:0000400">
    <property type="term" value="F:four-way junction DNA binding"/>
    <property type="evidence" value="ECO:0007669"/>
    <property type="project" value="UniProtKB-UniRule"/>
</dbReference>
<dbReference type="GO" id="GO:0009378">
    <property type="term" value="F:four-way junction helicase activity"/>
    <property type="evidence" value="ECO:0007669"/>
    <property type="project" value="InterPro"/>
</dbReference>
<dbReference type="GO" id="GO:0006310">
    <property type="term" value="P:DNA recombination"/>
    <property type="evidence" value="ECO:0007669"/>
    <property type="project" value="UniProtKB-UniRule"/>
</dbReference>
<dbReference type="GO" id="GO:0006281">
    <property type="term" value="P:DNA repair"/>
    <property type="evidence" value="ECO:0007669"/>
    <property type="project" value="UniProtKB-UniRule"/>
</dbReference>
<dbReference type="CDD" id="cd00009">
    <property type="entry name" value="AAA"/>
    <property type="match status" value="1"/>
</dbReference>
<dbReference type="FunFam" id="1.10.10.10:FF:000086">
    <property type="entry name" value="Holliday junction ATP-dependent DNA helicase RuvB"/>
    <property type="match status" value="1"/>
</dbReference>
<dbReference type="FunFam" id="1.10.8.60:FF:000023">
    <property type="entry name" value="Holliday junction ATP-dependent DNA helicase RuvB"/>
    <property type="match status" value="1"/>
</dbReference>
<dbReference type="FunFam" id="3.40.50.300:FF:000073">
    <property type="entry name" value="Holliday junction ATP-dependent DNA helicase RuvB"/>
    <property type="match status" value="1"/>
</dbReference>
<dbReference type="Gene3D" id="1.10.8.60">
    <property type="match status" value="1"/>
</dbReference>
<dbReference type="Gene3D" id="3.40.50.300">
    <property type="entry name" value="P-loop containing nucleotide triphosphate hydrolases"/>
    <property type="match status" value="1"/>
</dbReference>
<dbReference type="Gene3D" id="1.10.10.10">
    <property type="entry name" value="Winged helix-like DNA-binding domain superfamily/Winged helix DNA-binding domain"/>
    <property type="match status" value="1"/>
</dbReference>
<dbReference type="HAMAP" id="MF_00016">
    <property type="entry name" value="DNA_HJ_migration_RuvB"/>
    <property type="match status" value="1"/>
</dbReference>
<dbReference type="InterPro" id="IPR003593">
    <property type="entry name" value="AAA+_ATPase"/>
</dbReference>
<dbReference type="InterPro" id="IPR041445">
    <property type="entry name" value="AAA_lid_4"/>
</dbReference>
<dbReference type="InterPro" id="IPR004605">
    <property type="entry name" value="DNA_helicase_Holl-junc_RuvB"/>
</dbReference>
<dbReference type="InterPro" id="IPR027417">
    <property type="entry name" value="P-loop_NTPase"/>
</dbReference>
<dbReference type="InterPro" id="IPR008824">
    <property type="entry name" value="RuvB-like_N"/>
</dbReference>
<dbReference type="InterPro" id="IPR008823">
    <property type="entry name" value="RuvB_C"/>
</dbReference>
<dbReference type="InterPro" id="IPR036388">
    <property type="entry name" value="WH-like_DNA-bd_sf"/>
</dbReference>
<dbReference type="InterPro" id="IPR036390">
    <property type="entry name" value="WH_DNA-bd_sf"/>
</dbReference>
<dbReference type="NCBIfam" id="NF000868">
    <property type="entry name" value="PRK00080.1"/>
    <property type="match status" value="1"/>
</dbReference>
<dbReference type="NCBIfam" id="TIGR00635">
    <property type="entry name" value="ruvB"/>
    <property type="match status" value="1"/>
</dbReference>
<dbReference type="PANTHER" id="PTHR42848">
    <property type="match status" value="1"/>
</dbReference>
<dbReference type="PANTHER" id="PTHR42848:SF1">
    <property type="entry name" value="HOLLIDAY JUNCTION BRANCH MIGRATION COMPLEX SUBUNIT RUVB"/>
    <property type="match status" value="1"/>
</dbReference>
<dbReference type="Pfam" id="PF17864">
    <property type="entry name" value="AAA_lid_4"/>
    <property type="match status" value="1"/>
</dbReference>
<dbReference type="Pfam" id="PF05491">
    <property type="entry name" value="RuvB_C"/>
    <property type="match status" value="1"/>
</dbReference>
<dbReference type="Pfam" id="PF05496">
    <property type="entry name" value="RuvB_N"/>
    <property type="match status" value="1"/>
</dbReference>
<dbReference type="SMART" id="SM00382">
    <property type="entry name" value="AAA"/>
    <property type="match status" value="1"/>
</dbReference>
<dbReference type="SUPFAM" id="SSF52540">
    <property type="entry name" value="P-loop containing nucleoside triphosphate hydrolases"/>
    <property type="match status" value="1"/>
</dbReference>
<dbReference type="SUPFAM" id="SSF46785">
    <property type="entry name" value="Winged helix' DNA-binding domain"/>
    <property type="match status" value="1"/>
</dbReference>
<sequence>MIEADRLVAPGSIVAEEVADRAIRPKLLEEYIGQPQVRSQMEIFIQAAKLRGDALDHLLIFGPPGLGKTTLANIVANEMGVNLRTTSGPVLEKAGDLAAMLTNLEPHDVLFIDEIHRLSPVVEEVLYPAMEDYQLDIMIGEGPAARSIKIDLPPFTLIGATTRAGSLTSPLRDRFGIVQRLEFYQVADLQHIVSRSARHMGLEMNDEASLEVAKRSRGTPRIANRLLRRVRDFAEVRHDGVINQHVASQALDMLNVDAEGFDYMDRKLLLAVIDKFFGGPVGLDNLAAAIGEERETIEDVLEPFLIQQGFLQRTPRGRMATTRAWNHFGITPPQMP</sequence>
<organism>
    <name type="scientific">Cronobacter sakazakii (strain ATCC BAA-894)</name>
    <name type="common">Enterobacter sakazakii</name>
    <dbReference type="NCBI Taxonomy" id="290339"/>
    <lineage>
        <taxon>Bacteria</taxon>
        <taxon>Pseudomonadati</taxon>
        <taxon>Pseudomonadota</taxon>
        <taxon>Gammaproteobacteria</taxon>
        <taxon>Enterobacterales</taxon>
        <taxon>Enterobacteriaceae</taxon>
        <taxon>Cronobacter</taxon>
    </lineage>
</organism>
<accession>A7MEA3</accession>
<keyword id="KW-0067">ATP-binding</keyword>
<keyword id="KW-0963">Cytoplasm</keyword>
<keyword id="KW-0227">DNA damage</keyword>
<keyword id="KW-0233">DNA recombination</keyword>
<keyword id="KW-0234">DNA repair</keyword>
<keyword id="KW-0238">DNA-binding</keyword>
<keyword id="KW-0378">Hydrolase</keyword>
<keyword id="KW-0547">Nucleotide-binding</keyword>
<keyword id="KW-1185">Reference proteome</keyword>
<name>RUVB_CROS8</name>